<reference evidence="10" key="1">
    <citation type="journal article" date="2007" name="FEMS Microbiol. Ecol.">
        <title>An ice-binding protein from an Antarctic sea ice bacterium.</title>
        <authorList>
            <person name="Raymond J.A."/>
            <person name="Fritsen C."/>
            <person name="Shen K."/>
        </authorList>
    </citation>
    <scope>NUCLEOTIDE SEQUENCE [GENOMIC DNA]</scope>
    <scope>PROTEIN SEQUENCE OF 179-188 AND 216-227</scope>
    <scope>FUNCTION</scope>
    <scope>SUBCELLULAR LOCATION</scope>
    <source>
        <strain evidence="6 10">SLW05</strain>
    </source>
</reference>
<reference evidence="11" key="2">
    <citation type="journal article" date="2014" name="FEBS J.">
        <title>Hyperactive antifreeze protein from an Antarctic sea ice bacterium Colwellia sp. has a compound ice-binding site without repetitive sequences.</title>
        <authorList>
            <person name="Hanada Y."/>
            <person name="Nishimiya Y."/>
            <person name="Miura A."/>
            <person name="Tsuda S."/>
            <person name="Kondo H."/>
        </authorList>
    </citation>
    <scope>X-RAY CRYSTALLOGRAPHY (1.60 ANGSTROMS) OF 28-253</scope>
    <scope>FUNCTION</scope>
    <scope>DISULFIDE BOND</scope>
    <scope>MUTAGENESIS OF THR-214; SER-217; THR-232; ALA-233 AND THR-235</scope>
    <scope>CIRCULAR DICHROISM ANALYSIS</scope>
    <source>
        <strain evidence="7">SLW05</strain>
    </source>
</reference>
<comment type="function">
    <text evidence="4 5 9">Binds to the surface of ice crystals and inhibits their growth (PubMed:17651136, PubMed:24938370). Has ice recrystallization inhibition (RI) activity (the ability to prevent the formation of larger grains of ice at the expense of smaller grains), which may protect membranes from freezing injury (Probable). Has high thermal hysteresis (TH) activity, which is the ability to lower the freezing point of an aqueous solution below its melting point, and thus the freezing of the cell fluid can be prevented protecting the organism from ice damage. The TH activity of this protein is 3.8 degrees Celsius at 14 mM (PubMed:24938370).</text>
</comment>
<comment type="subcellular location">
    <subcellularLocation>
        <location evidence="4">Secreted</location>
    </subcellularLocation>
</comment>
<comment type="similarity">
    <text evidence="8">Belongs to the ice-binding protein family.</text>
</comment>
<name>IBP_COLSX</name>
<evidence type="ECO:0000250" key="1">
    <source>
        <dbReference type="UniProtKB" id="C7F6X3"/>
    </source>
</evidence>
<evidence type="ECO:0000250" key="2">
    <source>
        <dbReference type="UniProtKB" id="H7FWB6"/>
    </source>
</evidence>
<evidence type="ECO:0000255" key="3"/>
<evidence type="ECO:0000269" key="4">
    <source>
    </source>
</evidence>
<evidence type="ECO:0000269" key="5">
    <source>
    </source>
</evidence>
<evidence type="ECO:0000303" key="6">
    <source>
    </source>
</evidence>
<evidence type="ECO:0000303" key="7">
    <source>
    </source>
</evidence>
<evidence type="ECO:0000305" key="8"/>
<evidence type="ECO:0000305" key="9">
    <source>
    </source>
</evidence>
<evidence type="ECO:0000312" key="10">
    <source>
        <dbReference type="EMBL" id="ABH08428.1"/>
    </source>
</evidence>
<evidence type="ECO:0007744" key="11">
    <source>
        <dbReference type="PDB" id="3WP9"/>
    </source>
</evidence>
<evidence type="ECO:0007829" key="12">
    <source>
        <dbReference type="PDB" id="3WP9"/>
    </source>
</evidence>
<dbReference type="EMBL" id="DQ788793">
    <property type="protein sequence ID" value="ABH08428.1"/>
    <property type="molecule type" value="Genomic_DNA"/>
</dbReference>
<dbReference type="PDB" id="3WP9">
    <property type="method" value="X-ray"/>
    <property type="resolution" value="1.60 A"/>
    <property type="chains" value="A=28-253"/>
</dbReference>
<dbReference type="PDBsum" id="3WP9"/>
<dbReference type="SMR" id="A5XB26"/>
<dbReference type="EvolutionaryTrace" id="A5XB26"/>
<dbReference type="GO" id="GO:0005576">
    <property type="term" value="C:extracellular region"/>
    <property type="evidence" value="ECO:0007669"/>
    <property type="project" value="UniProtKB-SubCell"/>
</dbReference>
<dbReference type="InterPro" id="IPR021884">
    <property type="entry name" value="Ice-bd_prot"/>
</dbReference>
<dbReference type="Pfam" id="PF11999">
    <property type="entry name" value="Ice_binding"/>
    <property type="match status" value="1"/>
</dbReference>
<protein>
    <recommendedName>
        <fullName evidence="6 10">Ice-binding protein</fullName>
    </recommendedName>
    <alternativeName>
        <fullName evidence="7">Antifreeze protein</fullName>
        <shortName>AFP</shortName>
    </alternativeName>
</protein>
<proteinExistence type="evidence at protein level"/>
<accession>A5XB26</accession>
<feature type="signal peptide" evidence="3">
    <location>
        <begin position="1"/>
        <end position="27"/>
    </location>
</feature>
<feature type="chain" id="PRO_5002689647" description="Ice-binding protein" evidence="3">
    <location>
        <begin position="28"/>
        <end position="253"/>
    </location>
</feature>
<feature type="short sequence motif" description="Ice-binding site motif (T-A/G-X-T/N) 1" evidence="2">
    <location>
        <begin position="220"/>
        <end position="223"/>
    </location>
</feature>
<feature type="short sequence motif" description="Ice-binding site motif (T-A/G-X-T/N) 2" evidence="2">
    <location>
        <begin position="232"/>
        <end position="235"/>
    </location>
</feature>
<feature type="site" description="Ice-binding" evidence="1">
    <location>
        <position position="67"/>
    </location>
</feature>
<feature type="site" description="Ice-binding" evidence="2">
    <location>
        <position position="220"/>
    </location>
</feature>
<feature type="disulfide bond" evidence="5 11">
    <location>
        <begin position="75"/>
        <end position="93"/>
    </location>
</feature>
<feature type="mutagenesis site" description="Has 20% thermal hysteresis (TH) activity of that of the wild-type. Has 2.6% thermal hysteresis (TH) activity of that of the wild-type; when associated with Y-233." evidence="5">
    <original>T</original>
    <variation>Y</variation>
    <location>
        <position position="214"/>
    </location>
</feature>
<feature type="mutagenesis site" description="No effect on thermal hysteresis (TH) activity." evidence="5">
    <original>S</original>
    <variation>Y</variation>
    <location>
        <position position="217"/>
    </location>
</feature>
<feature type="mutagenesis site" description="Increased thermal hysteresis (TH) activity compared to wild-type." evidence="5">
    <original>T</original>
    <variation>K</variation>
    <location>
        <position position="232"/>
    </location>
</feature>
<feature type="mutagenesis site" description="Has 50% thermal hysteresis (TH) activity of that of the wild-type." evidence="5">
    <original>T</original>
    <variation>Y</variation>
    <location>
        <position position="232"/>
    </location>
</feature>
<feature type="mutagenesis site" description="Significant decrease in thermal hysteresis (TH) activity compared to wild-type. Has 2.6% thermal hysteresis (TH) activity of that of the wild-type; when associated with Y-214." evidence="5">
    <original>A</original>
    <variation>Y</variation>
    <location>
        <position position="233"/>
    </location>
</feature>
<feature type="mutagenesis site" description="Has 17% thermal hysteresis (TH) activity of that of the wild-type." evidence="5">
    <original>T</original>
    <variation>Y</variation>
    <location>
        <position position="235"/>
    </location>
</feature>
<feature type="sequence conflict" description="In Ref. 1; AA sequence." evidence="8" ref="1">
    <original>I</original>
    <variation>L</variation>
    <location>
        <position position="216"/>
    </location>
</feature>
<feature type="sequence conflict" description="In Ref. 1; AA sequence." evidence="8" ref="1">
    <original>N</original>
    <variation>D</variation>
    <location>
        <position position="225"/>
    </location>
</feature>
<feature type="helix" evidence="12">
    <location>
        <begin position="36"/>
        <end position="40"/>
    </location>
</feature>
<feature type="strand" evidence="12">
    <location>
        <begin position="41"/>
        <end position="47"/>
    </location>
</feature>
<feature type="strand" evidence="12">
    <location>
        <begin position="49"/>
        <end position="53"/>
    </location>
</feature>
<feature type="strand" evidence="12">
    <location>
        <begin position="56"/>
        <end position="63"/>
    </location>
</feature>
<feature type="helix" evidence="12">
    <location>
        <begin position="68"/>
        <end position="70"/>
    </location>
</feature>
<feature type="helix" evidence="12">
    <location>
        <begin position="75"/>
        <end position="77"/>
    </location>
</feature>
<feature type="strand" evidence="12">
    <location>
        <begin position="78"/>
        <end position="80"/>
    </location>
</feature>
<feature type="strand" evidence="12">
    <location>
        <begin position="82"/>
        <end position="87"/>
    </location>
</feature>
<feature type="turn" evidence="12">
    <location>
        <begin position="91"/>
        <end position="93"/>
    </location>
</feature>
<feature type="strand" evidence="12">
    <location>
        <begin position="94"/>
        <end position="96"/>
    </location>
</feature>
<feature type="helix" evidence="12">
    <location>
        <begin position="98"/>
        <end position="116"/>
    </location>
</feature>
<feature type="strand" evidence="12">
    <location>
        <begin position="122"/>
        <end position="125"/>
    </location>
</feature>
<feature type="helix" evidence="12">
    <location>
        <begin position="126"/>
        <end position="129"/>
    </location>
</feature>
<feature type="strand" evidence="12">
    <location>
        <begin position="138"/>
        <end position="145"/>
    </location>
</feature>
<feature type="strand" evidence="12">
    <location>
        <begin position="147"/>
        <end position="149"/>
    </location>
</feature>
<feature type="strand" evidence="12">
    <location>
        <begin position="153"/>
        <end position="156"/>
    </location>
</feature>
<feature type="strand" evidence="12">
    <location>
        <begin position="163"/>
        <end position="169"/>
    </location>
</feature>
<feature type="strand" evidence="12">
    <location>
        <begin position="171"/>
        <end position="173"/>
    </location>
</feature>
<feature type="strand" evidence="12">
    <location>
        <begin position="178"/>
        <end position="182"/>
    </location>
</feature>
<feature type="helix" evidence="12">
    <location>
        <begin position="187"/>
        <end position="189"/>
    </location>
</feature>
<feature type="strand" evidence="12">
    <location>
        <begin position="190"/>
        <end position="196"/>
    </location>
</feature>
<feature type="strand" evidence="12">
    <location>
        <begin position="198"/>
        <end position="200"/>
    </location>
</feature>
<feature type="strand" evidence="12">
    <location>
        <begin position="205"/>
        <end position="214"/>
    </location>
</feature>
<feature type="strand" evidence="12">
    <location>
        <begin position="216"/>
        <end position="218"/>
    </location>
</feature>
<feature type="strand" evidence="12">
    <location>
        <begin position="223"/>
        <end position="232"/>
    </location>
</feature>
<feature type="strand" evidence="12">
    <location>
        <begin position="234"/>
        <end position="238"/>
    </location>
</feature>
<feature type="strand" evidence="12">
    <location>
        <begin position="240"/>
        <end position="242"/>
    </location>
</feature>
<feature type="strand" evidence="12">
    <location>
        <begin position="246"/>
        <end position="248"/>
    </location>
</feature>
<keyword id="KW-0002">3D-structure</keyword>
<keyword id="KW-0047">Antifreeze protein</keyword>
<keyword id="KW-0903">Direct protein sequencing</keyword>
<keyword id="KW-1015">Disulfide bond</keyword>
<keyword id="KW-0964">Secreted</keyword>
<keyword id="KW-0732">Signal</keyword>
<organism>
    <name type="scientific">Colwellia sp</name>
    <dbReference type="NCBI Taxonomy" id="56799"/>
    <lineage>
        <taxon>Bacteria</taxon>
        <taxon>Pseudomonadati</taxon>
        <taxon>Pseudomonadota</taxon>
        <taxon>Gammaproteobacteria</taxon>
        <taxon>Alteromonadales</taxon>
        <taxon>Colwelliaceae</taxon>
        <taxon>Colwellia</taxon>
    </lineage>
</organism>
<sequence length="253" mass="26350">MKTLISNSKKVLIPLIMGSIFAGNVMAAGPYAVELGEAGTFTILSKSGITDVYPSTVTGNVGTSPITGAALLLNCDEVTGAMYTVDSAGPLPCSINSPYLLELAVSDMGIAYNDAAGRVPADHTELGTGEIGGLTLEPGVYKWSSDVNISTDVTFNGTMDDVWIMQISGNLNQANAKRVTLTGGALAKNIFWQVAGYTALGTYASFEGIVLSKTLISVNTGTTVNGRLLAQTAVTLQKNTINAPTEQYEEAPL</sequence>